<sequence length="91" mass="10076">MTRSAKKGPFIDAHLLKKVEAAAGGKDKKPIKTWSRRSTILPDFIGLTIAVHNGRQHVPVYVTENMVGHKLGEFALTRTFKGHAADKKAKR</sequence>
<protein>
    <recommendedName>
        <fullName evidence="1">Small ribosomal subunit protein uS19</fullName>
    </recommendedName>
    <alternativeName>
        <fullName evidence="2">30S ribosomal protein S19</fullName>
    </alternativeName>
</protein>
<name>RS19_RALN1</name>
<reference key="1">
    <citation type="journal article" date="2002" name="Nature">
        <title>Genome sequence of the plant pathogen Ralstonia solanacearum.</title>
        <authorList>
            <person name="Salanoubat M."/>
            <person name="Genin S."/>
            <person name="Artiguenave F."/>
            <person name="Gouzy J."/>
            <person name="Mangenot S."/>
            <person name="Arlat M."/>
            <person name="Billault A."/>
            <person name="Brottier P."/>
            <person name="Camus J.-C."/>
            <person name="Cattolico L."/>
            <person name="Chandler M."/>
            <person name="Choisne N."/>
            <person name="Claudel-Renard C."/>
            <person name="Cunnac S."/>
            <person name="Demange N."/>
            <person name="Gaspin C."/>
            <person name="Lavie M."/>
            <person name="Moisan A."/>
            <person name="Robert C."/>
            <person name="Saurin W."/>
            <person name="Schiex T."/>
            <person name="Siguier P."/>
            <person name="Thebault P."/>
            <person name="Whalen M."/>
            <person name="Wincker P."/>
            <person name="Levy M."/>
            <person name="Weissenbach J."/>
            <person name="Boucher C.A."/>
        </authorList>
    </citation>
    <scope>NUCLEOTIDE SEQUENCE [LARGE SCALE GENOMIC DNA]</scope>
    <source>
        <strain>ATCC BAA-1114 / GMI1000</strain>
    </source>
</reference>
<dbReference type="EMBL" id="AL646052">
    <property type="protein sequence ID" value="CAD16724.1"/>
    <property type="molecule type" value="Genomic_DNA"/>
</dbReference>
<dbReference type="RefSeq" id="WP_011002914.1">
    <property type="nucleotide sequence ID" value="NC_003295.1"/>
</dbReference>
<dbReference type="SMR" id="Q8XV16"/>
<dbReference type="STRING" id="267608.RSc3015"/>
<dbReference type="EnsemblBacteria" id="CAD16724">
    <property type="protein sequence ID" value="CAD16724"/>
    <property type="gene ID" value="RSc3015"/>
</dbReference>
<dbReference type="GeneID" id="97319852"/>
<dbReference type="KEGG" id="rso:RSc3015"/>
<dbReference type="eggNOG" id="COG0185">
    <property type="taxonomic scope" value="Bacteria"/>
</dbReference>
<dbReference type="HOGENOM" id="CLU_144911_0_1_4"/>
<dbReference type="Proteomes" id="UP000001436">
    <property type="component" value="Chromosome"/>
</dbReference>
<dbReference type="GO" id="GO:0005737">
    <property type="term" value="C:cytoplasm"/>
    <property type="evidence" value="ECO:0007669"/>
    <property type="project" value="UniProtKB-ARBA"/>
</dbReference>
<dbReference type="GO" id="GO:0015935">
    <property type="term" value="C:small ribosomal subunit"/>
    <property type="evidence" value="ECO:0007669"/>
    <property type="project" value="InterPro"/>
</dbReference>
<dbReference type="GO" id="GO:0019843">
    <property type="term" value="F:rRNA binding"/>
    <property type="evidence" value="ECO:0007669"/>
    <property type="project" value="UniProtKB-UniRule"/>
</dbReference>
<dbReference type="GO" id="GO:0003735">
    <property type="term" value="F:structural constituent of ribosome"/>
    <property type="evidence" value="ECO:0007669"/>
    <property type="project" value="InterPro"/>
</dbReference>
<dbReference type="GO" id="GO:0000028">
    <property type="term" value="P:ribosomal small subunit assembly"/>
    <property type="evidence" value="ECO:0007669"/>
    <property type="project" value="TreeGrafter"/>
</dbReference>
<dbReference type="GO" id="GO:0006412">
    <property type="term" value="P:translation"/>
    <property type="evidence" value="ECO:0007669"/>
    <property type="project" value="UniProtKB-UniRule"/>
</dbReference>
<dbReference type="FunFam" id="3.30.860.10:FF:000001">
    <property type="entry name" value="30S ribosomal protein S19"/>
    <property type="match status" value="1"/>
</dbReference>
<dbReference type="Gene3D" id="3.30.860.10">
    <property type="entry name" value="30s Ribosomal Protein S19, Chain A"/>
    <property type="match status" value="1"/>
</dbReference>
<dbReference type="HAMAP" id="MF_00531">
    <property type="entry name" value="Ribosomal_uS19"/>
    <property type="match status" value="1"/>
</dbReference>
<dbReference type="InterPro" id="IPR002222">
    <property type="entry name" value="Ribosomal_uS19"/>
</dbReference>
<dbReference type="InterPro" id="IPR005732">
    <property type="entry name" value="Ribosomal_uS19_bac-type"/>
</dbReference>
<dbReference type="InterPro" id="IPR020934">
    <property type="entry name" value="Ribosomal_uS19_CS"/>
</dbReference>
<dbReference type="InterPro" id="IPR023575">
    <property type="entry name" value="Ribosomal_uS19_SF"/>
</dbReference>
<dbReference type="NCBIfam" id="TIGR01050">
    <property type="entry name" value="rpsS_bact"/>
    <property type="match status" value="1"/>
</dbReference>
<dbReference type="PANTHER" id="PTHR11880">
    <property type="entry name" value="RIBOSOMAL PROTEIN S19P FAMILY MEMBER"/>
    <property type="match status" value="1"/>
</dbReference>
<dbReference type="PANTHER" id="PTHR11880:SF8">
    <property type="entry name" value="SMALL RIBOSOMAL SUBUNIT PROTEIN US19M"/>
    <property type="match status" value="1"/>
</dbReference>
<dbReference type="Pfam" id="PF00203">
    <property type="entry name" value="Ribosomal_S19"/>
    <property type="match status" value="1"/>
</dbReference>
<dbReference type="PIRSF" id="PIRSF002144">
    <property type="entry name" value="Ribosomal_S19"/>
    <property type="match status" value="1"/>
</dbReference>
<dbReference type="PRINTS" id="PR00975">
    <property type="entry name" value="RIBOSOMALS19"/>
</dbReference>
<dbReference type="SUPFAM" id="SSF54570">
    <property type="entry name" value="Ribosomal protein S19"/>
    <property type="match status" value="1"/>
</dbReference>
<dbReference type="PROSITE" id="PS00323">
    <property type="entry name" value="RIBOSOMAL_S19"/>
    <property type="match status" value="1"/>
</dbReference>
<comment type="function">
    <text evidence="1">Protein S19 forms a complex with S13 that binds strongly to the 16S ribosomal RNA.</text>
</comment>
<comment type="similarity">
    <text evidence="1">Belongs to the universal ribosomal protein uS19 family.</text>
</comment>
<keyword id="KW-1185">Reference proteome</keyword>
<keyword id="KW-0687">Ribonucleoprotein</keyword>
<keyword id="KW-0689">Ribosomal protein</keyword>
<keyword id="KW-0694">RNA-binding</keyword>
<keyword id="KW-0699">rRNA-binding</keyword>
<evidence type="ECO:0000255" key="1">
    <source>
        <dbReference type="HAMAP-Rule" id="MF_00531"/>
    </source>
</evidence>
<evidence type="ECO:0000305" key="2"/>
<feature type="chain" id="PRO_0000129886" description="Small ribosomal subunit protein uS19">
    <location>
        <begin position="1"/>
        <end position="91"/>
    </location>
</feature>
<proteinExistence type="inferred from homology"/>
<accession>Q8XV16</accession>
<gene>
    <name evidence="1" type="primary">rpsS</name>
    <name type="ordered locus">RSc3015</name>
    <name type="ORF">RS04742</name>
</gene>
<organism>
    <name type="scientific">Ralstonia nicotianae (strain ATCC BAA-1114 / GMI1000)</name>
    <name type="common">Ralstonia solanacearum</name>
    <dbReference type="NCBI Taxonomy" id="267608"/>
    <lineage>
        <taxon>Bacteria</taxon>
        <taxon>Pseudomonadati</taxon>
        <taxon>Pseudomonadota</taxon>
        <taxon>Betaproteobacteria</taxon>
        <taxon>Burkholderiales</taxon>
        <taxon>Burkholderiaceae</taxon>
        <taxon>Ralstonia</taxon>
        <taxon>Ralstonia solanacearum species complex</taxon>
    </lineage>
</organism>